<name>IF5A_CANAL</name>
<organism>
    <name type="scientific">Candida albicans (strain SC5314 / ATCC MYA-2876)</name>
    <name type="common">Yeast</name>
    <dbReference type="NCBI Taxonomy" id="237561"/>
    <lineage>
        <taxon>Eukaryota</taxon>
        <taxon>Fungi</taxon>
        <taxon>Dikarya</taxon>
        <taxon>Ascomycota</taxon>
        <taxon>Saccharomycotina</taxon>
        <taxon>Pichiomycetes</taxon>
        <taxon>Debaryomycetaceae</taxon>
        <taxon>Candida/Lodderomyces clade</taxon>
        <taxon>Candida</taxon>
    </lineage>
</organism>
<reference key="1">
    <citation type="submission" date="1994-03" db="EMBL/GenBank/DDBJ databases">
        <title>Organization of the Candida albicans TIF51 gene encoding the translation initiation factor eIF-5A.</title>
        <authorList>
            <person name="Pereira S.A."/>
            <person name="Ganguly S."/>
            <person name="Livi G.P."/>
        </authorList>
    </citation>
    <scope>NUCLEOTIDE SEQUENCE [GENOMIC DNA]</scope>
    <source>
        <strain>ATCC 11651 / B792 / 171D</strain>
    </source>
</reference>
<reference key="2">
    <citation type="journal article" date="2004" name="Proc. Natl. Acad. Sci. U.S.A.">
        <title>The diploid genome sequence of Candida albicans.</title>
        <authorList>
            <person name="Jones T."/>
            <person name="Federspiel N.A."/>
            <person name="Chibana H."/>
            <person name="Dungan J."/>
            <person name="Kalman S."/>
            <person name="Magee B.B."/>
            <person name="Newport G."/>
            <person name="Thorstenson Y.R."/>
            <person name="Agabian N."/>
            <person name="Magee P.T."/>
            <person name="Davis R.W."/>
            <person name="Scherer S."/>
        </authorList>
    </citation>
    <scope>NUCLEOTIDE SEQUENCE [LARGE SCALE GENOMIC DNA]</scope>
    <source>
        <strain>SC5314 / ATCC MYA-2876</strain>
    </source>
</reference>
<reference key="3">
    <citation type="journal article" date="2007" name="Genome Biol.">
        <title>Assembly of the Candida albicans genome into sixteen supercontigs aligned on the eight chromosomes.</title>
        <authorList>
            <person name="van het Hoog M."/>
            <person name="Rast T.J."/>
            <person name="Martchenko M."/>
            <person name="Grindle S."/>
            <person name="Dignard D."/>
            <person name="Hogues H."/>
            <person name="Cuomo C."/>
            <person name="Berriman M."/>
            <person name="Scherer S."/>
            <person name="Magee B.B."/>
            <person name="Whiteway M."/>
            <person name="Chibana H."/>
            <person name="Nantel A."/>
            <person name="Magee P.T."/>
        </authorList>
    </citation>
    <scope>GENOME REANNOTATION</scope>
    <source>
        <strain>SC5314 / ATCC MYA-2876</strain>
    </source>
</reference>
<reference key="4">
    <citation type="journal article" date="2013" name="Genome Biol.">
        <title>Assembly of a phased diploid Candida albicans genome facilitates allele-specific measurements and provides a simple model for repeat and indel structure.</title>
        <authorList>
            <person name="Muzzey D."/>
            <person name="Schwartz K."/>
            <person name="Weissman J.S."/>
            <person name="Sherlock G."/>
        </authorList>
    </citation>
    <scope>NUCLEOTIDE SEQUENCE [LARGE SCALE GENOMIC DNA]</scope>
    <scope>GENOME REANNOTATION</scope>
    <source>
        <strain>SC5314 / ATCC MYA-2876</strain>
    </source>
</reference>
<protein>
    <recommendedName>
        <fullName>Eukaryotic translation initiation factor 5A</fullName>
        <shortName>eIF-5A</shortName>
    </recommendedName>
    <alternativeName>
        <fullName>eIF-4D</fullName>
    </alternativeName>
</protein>
<feature type="chain" id="PRO_0000142483" description="Eukaryotic translation initiation factor 5A">
    <location>
        <begin position="1"/>
        <end position="158"/>
    </location>
</feature>
<feature type="modified residue" description="Hypusine" evidence="1">
    <location>
        <position position="51"/>
    </location>
</feature>
<feature type="sequence conflict" description="In Ref. 1; AAD10697." ref="1">
    <location>
        <position position="6"/>
    </location>
</feature>
<dbReference type="EMBL" id="U07366">
    <property type="protein sequence ID" value="AAD10697.1"/>
    <property type="molecule type" value="Genomic_DNA"/>
</dbReference>
<dbReference type="EMBL" id="CP017628">
    <property type="protein sequence ID" value="AOW30099.1"/>
    <property type="molecule type" value="Genomic_DNA"/>
</dbReference>
<dbReference type="RefSeq" id="XP_019330999.1">
    <property type="nucleotide sequence ID" value="XM_019475454.1"/>
</dbReference>
<dbReference type="SMR" id="O94083"/>
<dbReference type="FunCoup" id="O94083">
    <property type="interactions" value="1056"/>
</dbReference>
<dbReference type="STRING" id="237561.O94083"/>
<dbReference type="EnsemblFungi" id="C6_01610W_A-T">
    <property type="protein sequence ID" value="C6_01610W_A-T-p1"/>
    <property type="gene ID" value="C6_01610W_A"/>
</dbReference>
<dbReference type="GeneID" id="3641648"/>
<dbReference type="KEGG" id="cal:CAALFM_C601610WA"/>
<dbReference type="CGD" id="CAL0000197571">
    <property type="gene designation" value="ANB1"/>
</dbReference>
<dbReference type="VEuPathDB" id="FungiDB:C6_01610W_A"/>
<dbReference type="HOGENOM" id="CLU_102600_0_0_1"/>
<dbReference type="InParanoid" id="O94083"/>
<dbReference type="OMA" id="QIMDMET"/>
<dbReference type="OrthoDB" id="9975114at2759"/>
<dbReference type="PRO" id="PR:O94083"/>
<dbReference type="Proteomes" id="UP000000559">
    <property type="component" value="Chromosome 6"/>
</dbReference>
<dbReference type="GO" id="GO:0005737">
    <property type="term" value="C:cytoplasm"/>
    <property type="evidence" value="ECO:0007669"/>
    <property type="project" value="UniProtKB-SubCell"/>
</dbReference>
<dbReference type="GO" id="GO:0043022">
    <property type="term" value="F:ribosome binding"/>
    <property type="evidence" value="ECO:0007669"/>
    <property type="project" value="InterPro"/>
</dbReference>
<dbReference type="GO" id="GO:0003723">
    <property type="term" value="F:RNA binding"/>
    <property type="evidence" value="ECO:0007669"/>
    <property type="project" value="UniProtKB-KW"/>
</dbReference>
<dbReference type="GO" id="GO:0003746">
    <property type="term" value="F:translation elongation factor activity"/>
    <property type="evidence" value="ECO:0000318"/>
    <property type="project" value="GO_Central"/>
</dbReference>
<dbReference type="GO" id="GO:0045901">
    <property type="term" value="P:positive regulation of translational elongation"/>
    <property type="evidence" value="ECO:0007669"/>
    <property type="project" value="InterPro"/>
</dbReference>
<dbReference type="GO" id="GO:0045905">
    <property type="term" value="P:positive regulation of translational termination"/>
    <property type="evidence" value="ECO:0007669"/>
    <property type="project" value="InterPro"/>
</dbReference>
<dbReference type="GO" id="GO:0006414">
    <property type="term" value="P:translational elongation"/>
    <property type="evidence" value="ECO:0000318"/>
    <property type="project" value="GO_Central"/>
</dbReference>
<dbReference type="CDD" id="cd04468">
    <property type="entry name" value="S1_eIF5A"/>
    <property type="match status" value="1"/>
</dbReference>
<dbReference type="FunFam" id="2.30.30.30:FF:000007">
    <property type="entry name" value="Eukaryotic translation initiation factor 5A"/>
    <property type="match status" value="1"/>
</dbReference>
<dbReference type="FunFam" id="2.40.50.140:FF:000034">
    <property type="entry name" value="Eukaryotic translation initiation factor 5A"/>
    <property type="match status" value="1"/>
</dbReference>
<dbReference type="Gene3D" id="2.30.30.30">
    <property type="match status" value="1"/>
</dbReference>
<dbReference type="Gene3D" id="2.40.50.140">
    <property type="entry name" value="Nucleic acid-binding proteins"/>
    <property type="match status" value="1"/>
</dbReference>
<dbReference type="InterPro" id="IPR001884">
    <property type="entry name" value="IF5A-like"/>
</dbReference>
<dbReference type="InterPro" id="IPR048670">
    <property type="entry name" value="IF5A-like_N"/>
</dbReference>
<dbReference type="InterPro" id="IPR012340">
    <property type="entry name" value="NA-bd_OB-fold"/>
</dbReference>
<dbReference type="InterPro" id="IPR014722">
    <property type="entry name" value="Rib_uL2_dom2"/>
</dbReference>
<dbReference type="InterPro" id="IPR019769">
    <property type="entry name" value="Trans_elong_IF5A_hypusine_site"/>
</dbReference>
<dbReference type="InterPro" id="IPR020189">
    <property type="entry name" value="Transl_elong_IF5A_C"/>
</dbReference>
<dbReference type="InterPro" id="IPR008991">
    <property type="entry name" value="Translation_prot_SH3-like_sf"/>
</dbReference>
<dbReference type="NCBIfam" id="TIGR00037">
    <property type="entry name" value="eIF_5A"/>
    <property type="match status" value="1"/>
</dbReference>
<dbReference type="PANTHER" id="PTHR11673">
    <property type="entry name" value="TRANSLATION INITIATION FACTOR 5A FAMILY MEMBER"/>
    <property type="match status" value="1"/>
</dbReference>
<dbReference type="Pfam" id="PF01287">
    <property type="entry name" value="eIF-5a"/>
    <property type="match status" value="1"/>
</dbReference>
<dbReference type="Pfam" id="PF21485">
    <property type="entry name" value="IF5A-like_N"/>
    <property type="match status" value="1"/>
</dbReference>
<dbReference type="PIRSF" id="PIRSF003025">
    <property type="entry name" value="eIF5A"/>
    <property type="match status" value="1"/>
</dbReference>
<dbReference type="SMART" id="SM01376">
    <property type="entry name" value="eIF-5a"/>
    <property type="match status" value="1"/>
</dbReference>
<dbReference type="SUPFAM" id="SSF50249">
    <property type="entry name" value="Nucleic acid-binding proteins"/>
    <property type="match status" value="1"/>
</dbReference>
<dbReference type="SUPFAM" id="SSF50104">
    <property type="entry name" value="Translation proteins SH3-like domain"/>
    <property type="match status" value="1"/>
</dbReference>
<dbReference type="PROSITE" id="PS00302">
    <property type="entry name" value="IF5A_HYPUSINE"/>
    <property type="match status" value="1"/>
</dbReference>
<proteinExistence type="inferred from homology"/>
<accession>O94083</accession>
<accession>A0A1D8PPN5</accession>
<accession>Q5A4L5</accession>
<sequence length="158" mass="17132">MAEEDHTFETADAGAALTFPMQCSALRKNGHVVIKNRPCKIVDMSTSKTGKHGHAKVHLVAIDIFTGKKLEDLSPSTHNMEVPNVSRQEFQLLDIDDGYLSLMTADGDTKDDVKVPEGELGDKLQSEFDEGKDLIVTIISAMGEEAAISYKEAPKGSA</sequence>
<comment type="function">
    <text evidence="1">Translation factor that promotes translation elongation and termination, particularly upon ribosome stalling at specific amino acid sequence contexts. Binds between the exit (E) and peptidyl (P) site of the ribosome and promotes rescue of stalled ribosome: specifically required for efficient translation of polyproline-containing peptides as well as other motifs that stall the ribosome. Acts as a ribosome quality control (RQC) cofactor by joining the RQC complex to facilitate peptidyl transfer during CAT tailing step.</text>
</comment>
<comment type="subcellular location">
    <subcellularLocation>
        <location evidence="1">Cytoplasm</location>
    </subcellularLocation>
</comment>
<comment type="PTM">
    <text evidence="1">Lys-51 undergoes hypusination, a unique post-translational modification that consists in the addition of a butylamino group from spermidine to lysine side chain, leading to the formation of the unusual amino acid hypusine. eIF-5As are the only known proteins to undergo this modification, which is essential for their function.</text>
</comment>
<comment type="similarity">
    <text evidence="2">Belongs to the eIF-5A family.</text>
</comment>
<keyword id="KW-0963">Cytoplasm</keyword>
<keyword id="KW-0251">Elongation factor</keyword>
<keyword id="KW-0385">Hypusine</keyword>
<keyword id="KW-0648">Protein biosynthesis</keyword>
<keyword id="KW-1185">Reference proteome</keyword>
<keyword id="KW-0694">RNA-binding</keyword>
<evidence type="ECO:0000250" key="1">
    <source>
        <dbReference type="UniProtKB" id="P23301"/>
    </source>
</evidence>
<evidence type="ECO:0000305" key="2"/>
<gene>
    <name type="primary">ANB1</name>
    <name type="synonym">TIF51</name>
    <name type="ordered locus">CAALFM_C601610WA</name>
    <name type="ORF">CaO19.10930</name>
    <name type="ORF">CaO19.3426</name>
</gene>